<organism>
    <name type="scientific">Homo sapiens</name>
    <name type="common">Human</name>
    <dbReference type="NCBI Taxonomy" id="9606"/>
    <lineage>
        <taxon>Eukaryota</taxon>
        <taxon>Metazoa</taxon>
        <taxon>Chordata</taxon>
        <taxon>Craniata</taxon>
        <taxon>Vertebrata</taxon>
        <taxon>Euteleostomi</taxon>
        <taxon>Mammalia</taxon>
        <taxon>Eutheria</taxon>
        <taxon>Euarchontoglires</taxon>
        <taxon>Primates</taxon>
        <taxon>Haplorrhini</taxon>
        <taxon>Catarrhini</taxon>
        <taxon>Hominidae</taxon>
        <taxon>Homo</taxon>
    </lineage>
</organism>
<evidence type="ECO:0000256" key="1">
    <source>
        <dbReference type="SAM" id="MobiDB-lite"/>
    </source>
</evidence>
<evidence type="ECO:0000269" key="2">
    <source>
    </source>
</evidence>
<evidence type="ECO:0000269" key="3">
    <source>
    </source>
</evidence>
<evidence type="ECO:0000305" key="4"/>
<reference key="1">
    <citation type="journal article" date="2006" name="Nature">
        <title>The DNA sequence and biological annotation of human chromosome 1.</title>
        <authorList>
            <person name="Gregory S.G."/>
            <person name="Barlow K.F."/>
            <person name="McLay K.E."/>
            <person name="Kaul R."/>
            <person name="Swarbreck D."/>
            <person name="Dunham A."/>
            <person name="Scott C.E."/>
            <person name="Howe K.L."/>
            <person name="Woodfine K."/>
            <person name="Spencer C.C.A."/>
            <person name="Jones M.C."/>
            <person name="Gillson C."/>
            <person name="Searle S."/>
            <person name="Zhou Y."/>
            <person name="Kokocinski F."/>
            <person name="McDonald L."/>
            <person name="Evans R."/>
            <person name="Phillips K."/>
            <person name="Atkinson A."/>
            <person name="Cooper R."/>
            <person name="Jones C."/>
            <person name="Hall R.E."/>
            <person name="Andrews T.D."/>
            <person name="Lloyd C."/>
            <person name="Ainscough R."/>
            <person name="Almeida J.P."/>
            <person name="Ambrose K.D."/>
            <person name="Anderson F."/>
            <person name="Andrew R.W."/>
            <person name="Ashwell R.I.S."/>
            <person name="Aubin K."/>
            <person name="Babbage A.K."/>
            <person name="Bagguley C.L."/>
            <person name="Bailey J."/>
            <person name="Beasley H."/>
            <person name="Bethel G."/>
            <person name="Bird C.P."/>
            <person name="Bray-Allen S."/>
            <person name="Brown J.Y."/>
            <person name="Brown A.J."/>
            <person name="Buckley D."/>
            <person name="Burton J."/>
            <person name="Bye J."/>
            <person name="Carder C."/>
            <person name="Chapman J.C."/>
            <person name="Clark S.Y."/>
            <person name="Clarke G."/>
            <person name="Clee C."/>
            <person name="Cobley V."/>
            <person name="Collier R.E."/>
            <person name="Corby N."/>
            <person name="Coville G.J."/>
            <person name="Davies J."/>
            <person name="Deadman R."/>
            <person name="Dunn M."/>
            <person name="Earthrowl M."/>
            <person name="Ellington A.G."/>
            <person name="Errington H."/>
            <person name="Frankish A."/>
            <person name="Frankland J."/>
            <person name="French L."/>
            <person name="Garner P."/>
            <person name="Garnett J."/>
            <person name="Gay L."/>
            <person name="Ghori M.R.J."/>
            <person name="Gibson R."/>
            <person name="Gilby L.M."/>
            <person name="Gillett W."/>
            <person name="Glithero R.J."/>
            <person name="Grafham D.V."/>
            <person name="Griffiths C."/>
            <person name="Griffiths-Jones S."/>
            <person name="Grocock R."/>
            <person name="Hammond S."/>
            <person name="Harrison E.S.I."/>
            <person name="Hart E."/>
            <person name="Haugen E."/>
            <person name="Heath P.D."/>
            <person name="Holmes S."/>
            <person name="Holt K."/>
            <person name="Howden P.J."/>
            <person name="Hunt A.R."/>
            <person name="Hunt S.E."/>
            <person name="Hunter G."/>
            <person name="Isherwood J."/>
            <person name="James R."/>
            <person name="Johnson C."/>
            <person name="Johnson D."/>
            <person name="Joy A."/>
            <person name="Kay M."/>
            <person name="Kershaw J.K."/>
            <person name="Kibukawa M."/>
            <person name="Kimberley A.M."/>
            <person name="King A."/>
            <person name="Knights A.J."/>
            <person name="Lad H."/>
            <person name="Laird G."/>
            <person name="Lawlor S."/>
            <person name="Leongamornlert D.A."/>
            <person name="Lloyd D.M."/>
            <person name="Loveland J."/>
            <person name="Lovell J."/>
            <person name="Lush M.J."/>
            <person name="Lyne R."/>
            <person name="Martin S."/>
            <person name="Mashreghi-Mohammadi M."/>
            <person name="Matthews L."/>
            <person name="Matthews N.S.W."/>
            <person name="McLaren S."/>
            <person name="Milne S."/>
            <person name="Mistry S."/>
            <person name="Moore M.J.F."/>
            <person name="Nickerson T."/>
            <person name="O'Dell C.N."/>
            <person name="Oliver K."/>
            <person name="Palmeiri A."/>
            <person name="Palmer S.A."/>
            <person name="Parker A."/>
            <person name="Patel D."/>
            <person name="Pearce A.V."/>
            <person name="Peck A.I."/>
            <person name="Pelan S."/>
            <person name="Phelps K."/>
            <person name="Phillimore B.J."/>
            <person name="Plumb R."/>
            <person name="Rajan J."/>
            <person name="Raymond C."/>
            <person name="Rouse G."/>
            <person name="Saenphimmachak C."/>
            <person name="Sehra H.K."/>
            <person name="Sheridan E."/>
            <person name="Shownkeen R."/>
            <person name="Sims S."/>
            <person name="Skuce C.D."/>
            <person name="Smith M."/>
            <person name="Steward C."/>
            <person name="Subramanian S."/>
            <person name="Sycamore N."/>
            <person name="Tracey A."/>
            <person name="Tromans A."/>
            <person name="Van Helmond Z."/>
            <person name="Wall M."/>
            <person name="Wallis J.M."/>
            <person name="White S."/>
            <person name="Whitehead S.L."/>
            <person name="Wilkinson J.E."/>
            <person name="Willey D.L."/>
            <person name="Williams H."/>
            <person name="Wilming L."/>
            <person name="Wray P.W."/>
            <person name="Wu Z."/>
            <person name="Coulson A."/>
            <person name="Vaudin M."/>
            <person name="Sulston J.E."/>
            <person name="Durbin R.M."/>
            <person name="Hubbard T."/>
            <person name="Wooster R."/>
            <person name="Dunham I."/>
            <person name="Carter N.P."/>
            <person name="McVean G."/>
            <person name="Ross M.T."/>
            <person name="Harrow J."/>
            <person name="Olson M.V."/>
            <person name="Beck S."/>
            <person name="Rogers J."/>
            <person name="Bentley D.R."/>
        </authorList>
    </citation>
    <scope>NUCLEOTIDE SEQUENCE [LARGE SCALE GENOMIC DNA]</scope>
</reference>
<reference key="2">
    <citation type="journal article" date="2005" name="J. Invest. Dermatol.">
        <title>Late cornified envelope family in differentiating epithelia -- response to calcium and ultraviolet irradiation.</title>
        <authorList>
            <person name="Jackson B."/>
            <person name="Tilli C.L."/>
            <person name="Hardman M."/>
            <person name="Avilion A."/>
            <person name="Macleod M."/>
            <person name="Ashcroft G."/>
            <person name="Byrne C."/>
        </authorList>
    </citation>
    <scope>NOMENCLATURE</scope>
    <scope>TISSUE SPECIFICITY</scope>
    <scope>INDUCTION BY UVB</scope>
</reference>
<reference key="3">
    <citation type="journal article" date="2023" name="J. Invest. Dermatol.">
        <title>CYSRT1: An Antimicrobial Epidermal Protein that Can Interact with Late Cornified Envelope Proteins.</title>
        <authorList>
            <person name="Niehues H."/>
            <person name="Rikken G."/>
            <person name="Kersten F.F.J."/>
            <person name="Eeftens J.M."/>
            <person name="van Vlijmen-Willems I.M.J.J."/>
            <person name="Rodijk-Olthuis D."/>
            <person name="Jansen P.A.M."/>
            <person name="Hendriks W.J.A.J."/>
            <person name="Ederveen T.H.A."/>
            <person name="Schalkwijk J."/>
            <person name="van den Bogaard E.H."/>
            <person name="Zeeuwen P.L.J.M."/>
        </authorList>
    </citation>
    <scope>INTERACTION WITH CYSRT1</scope>
</reference>
<name>LCE1A_HUMAN</name>
<feature type="chain" id="PRO_0000235324" description="Late cornified envelope protein 1A">
    <location>
        <begin position="1"/>
        <end position="110"/>
    </location>
</feature>
<feature type="region of interest" description="Disordered" evidence="1">
    <location>
        <begin position="1"/>
        <end position="23"/>
    </location>
</feature>
<feature type="region of interest" description="Disordered" evidence="1">
    <location>
        <begin position="83"/>
        <end position="110"/>
    </location>
</feature>
<feature type="compositionally biased region" description="Low complexity" evidence="1">
    <location>
        <begin position="1"/>
        <end position="10"/>
    </location>
</feature>
<feature type="compositionally biased region" description="Pro residues" evidence="1">
    <location>
        <begin position="11"/>
        <end position="23"/>
    </location>
</feature>
<feature type="compositionally biased region" description="Low complexity" evidence="1">
    <location>
        <begin position="83"/>
        <end position="95"/>
    </location>
</feature>
<feature type="compositionally biased region" description="Gly residues" evidence="1">
    <location>
        <begin position="96"/>
        <end position="110"/>
    </location>
</feature>
<protein>
    <recommendedName>
        <fullName>Late cornified envelope protein 1A</fullName>
    </recommendedName>
    <alternativeName>
        <fullName>Late envelope protein 1</fullName>
    </alternativeName>
</protein>
<dbReference type="EMBL" id="AL162596">
    <property type="status" value="NOT_ANNOTATED_CDS"/>
    <property type="molecule type" value="Genomic_DNA"/>
</dbReference>
<dbReference type="CCDS" id="CCDS1028.1"/>
<dbReference type="RefSeq" id="NP_848125.1">
    <property type="nucleotide sequence ID" value="NM_178348.2"/>
</dbReference>
<dbReference type="BioGRID" id="131638">
    <property type="interactions" value="84"/>
</dbReference>
<dbReference type="FunCoup" id="Q5T7P2">
    <property type="interactions" value="36"/>
</dbReference>
<dbReference type="IntAct" id="Q5T7P2">
    <property type="interactions" value="67"/>
</dbReference>
<dbReference type="STRING" id="9606.ENSP00000334869"/>
<dbReference type="iPTMnet" id="Q5T7P2"/>
<dbReference type="PhosphoSitePlus" id="Q5T7P2"/>
<dbReference type="BioMuta" id="LCE1A"/>
<dbReference type="DMDM" id="74745413"/>
<dbReference type="MassIVE" id="Q5T7P2"/>
<dbReference type="PaxDb" id="9606-ENSP00000334869"/>
<dbReference type="PeptideAtlas" id="Q5T7P2"/>
<dbReference type="ProteomicsDB" id="64673"/>
<dbReference type="Pumba" id="Q5T7P2"/>
<dbReference type="Antibodypedia" id="54232">
    <property type="antibodies" value="86 antibodies from 16 providers"/>
</dbReference>
<dbReference type="DNASU" id="353131"/>
<dbReference type="Ensembl" id="ENST00000335123.4">
    <property type="protein sequence ID" value="ENSP00000334869.2"/>
    <property type="gene ID" value="ENSG00000186844.6"/>
</dbReference>
<dbReference type="GeneID" id="353131"/>
<dbReference type="KEGG" id="hsa:353131"/>
<dbReference type="MANE-Select" id="ENST00000335123.4">
    <property type="protein sequence ID" value="ENSP00000334869.2"/>
    <property type="RefSeq nucleotide sequence ID" value="NM_178348.2"/>
    <property type="RefSeq protein sequence ID" value="NP_848125.1"/>
</dbReference>
<dbReference type="UCSC" id="uc010pdw.3">
    <property type="organism name" value="human"/>
</dbReference>
<dbReference type="AGR" id="HGNC:29459"/>
<dbReference type="CTD" id="353131"/>
<dbReference type="DisGeNET" id="353131"/>
<dbReference type="GeneCards" id="LCE1A"/>
<dbReference type="HGNC" id="HGNC:29459">
    <property type="gene designation" value="LCE1A"/>
</dbReference>
<dbReference type="HPA" id="ENSG00000186844">
    <property type="expression patterns" value="Tissue enriched (skin)"/>
</dbReference>
<dbReference type="MIM" id="612603">
    <property type="type" value="gene"/>
</dbReference>
<dbReference type="neXtProt" id="NX_Q5T7P2"/>
<dbReference type="OpenTargets" id="ENSG00000186844"/>
<dbReference type="PharmGKB" id="PA134885053"/>
<dbReference type="VEuPathDB" id="HostDB:ENSG00000186844"/>
<dbReference type="eggNOG" id="ENOG502TBWQ">
    <property type="taxonomic scope" value="Eukaryota"/>
</dbReference>
<dbReference type="GeneTree" id="ENSGT00950000183312"/>
<dbReference type="HOGENOM" id="CLU_152038_0_0_1"/>
<dbReference type="InParanoid" id="Q5T7P2"/>
<dbReference type="OMA" id="CCGSCHS"/>
<dbReference type="PAN-GO" id="Q5T7P2">
    <property type="GO annotations" value="0 GO annotations based on evolutionary models"/>
</dbReference>
<dbReference type="PathwayCommons" id="Q5T7P2"/>
<dbReference type="Reactome" id="R-HSA-6809371">
    <property type="pathway name" value="Formation of the cornified envelope"/>
</dbReference>
<dbReference type="SignaLink" id="Q5T7P2"/>
<dbReference type="BioGRID-ORCS" id="353131">
    <property type="hits" value="331 hits in 1042 CRISPR screens"/>
</dbReference>
<dbReference type="Pharos" id="Q5T7P2">
    <property type="development level" value="Tbio"/>
</dbReference>
<dbReference type="PRO" id="PR:Q5T7P2"/>
<dbReference type="Proteomes" id="UP000005640">
    <property type="component" value="Chromosome 1"/>
</dbReference>
<dbReference type="RNAct" id="Q5T7P2">
    <property type="molecule type" value="protein"/>
</dbReference>
<dbReference type="Bgee" id="ENSG00000186844">
    <property type="expression patterns" value="Expressed in skin of leg and 58 other cell types or tissues"/>
</dbReference>
<dbReference type="GO" id="GO:0005829">
    <property type="term" value="C:cytosol"/>
    <property type="evidence" value="ECO:0000304"/>
    <property type="project" value="Reactome"/>
</dbReference>
<dbReference type="GO" id="GO:0031424">
    <property type="term" value="P:keratinization"/>
    <property type="evidence" value="ECO:0007669"/>
    <property type="project" value="UniProtKB-KW"/>
</dbReference>
<dbReference type="InterPro" id="IPR028205">
    <property type="entry name" value="LCE"/>
</dbReference>
<dbReference type="Pfam" id="PF14672">
    <property type="entry name" value="LCE"/>
    <property type="match status" value="2"/>
</dbReference>
<dbReference type="PRINTS" id="PR00021">
    <property type="entry name" value="PRORICH"/>
</dbReference>
<accession>Q5T7P2</accession>
<keyword id="KW-0417">Keratinization</keyword>
<keyword id="KW-1267">Proteomics identification</keyword>
<keyword id="KW-1185">Reference proteome</keyword>
<sequence>MSCQQSQQQCQPPPKCTPKCPPKCPTPKCPPKCPPKCPPVSSCCSVSSGGCCGSSSGGGCSSGGGGCCLSHHRRHRSHRHRLQSSGCCSQPSGGSSCCGGDSGQHSGGCC</sequence>
<comment type="function">
    <text>Precursors of the cornified envelope of the stratum corneum.</text>
</comment>
<comment type="subunit">
    <text evidence="3">Interacts with CYSRT1.</text>
</comment>
<comment type="interaction">
    <interactant intactId="EBI-11962058">
        <id>Q5T7P2</id>
    </interactant>
    <interactant intactId="EBI-10173507">
        <id>Q6UY14-3</id>
        <label>ADAMTSL4</label>
    </interactant>
    <organismsDiffer>false</organismsDiffer>
    <experiments>3</experiments>
</comment>
<comment type="interaction">
    <interactant intactId="EBI-11962058">
        <id>Q5T7P2</id>
    </interactant>
    <interactant intactId="EBI-745213">
        <id>P29972</id>
        <label>AQP1</label>
    </interactant>
    <organismsDiffer>false</organismsDiffer>
    <experiments>3</experiments>
</comment>
<comment type="interaction">
    <interactant intactId="EBI-11962058">
        <id>Q5T7P2</id>
    </interactant>
    <interactant intactId="EBI-3904822">
        <id>P48745</id>
        <label>CCN3</label>
    </interactant>
    <organismsDiffer>false</organismsDiffer>
    <experiments>3</experiments>
</comment>
<comment type="interaction">
    <interactant intactId="EBI-11962058">
        <id>Q5T7P2</id>
    </interactant>
    <interactant intactId="EBI-9038570">
        <id>P27918</id>
        <label>CFP</label>
    </interactant>
    <organismsDiffer>false</organismsDiffer>
    <experiments>3</experiments>
</comment>
<comment type="interaction">
    <interactant intactId="EBI-11962058">
        <id>Q5T7P2</id>
    </interactant>
    <interactant intactId="EBI-741528">
        <id>Q9UKJ5</id>
        <label>CHIC2</label>
    </interactant>
    <organismsDiffer>false</organismsDiffer>
    <experiments>3</experiments>
</comment>
<comment type="interaction">
    <interactant intactId="EBI-11962058">
        <id>Q5T7P2</id>
    </interactant>
    <interactant intactId="EBI-3867333">
        <id>A8MQ03</id>
        <label>CYSRT1</label>
    </interactant>
    <organismsDiffer>false</organismsDiffer>
    <experiments>6</experiments>
</comment>
<comment type="interaction">
    <interactant intactId="EBI-11962058">
        <id>Q5T7P2</id>
    </interactant>
    <interactant intactId="EBI-743414">
        <id>O95967</id>
        <label>EFEMP2</label>
    </interactant>
    <organismsDiffer>false</organismsDiffer>
    <experiments>3</experiments>
</comment>
<comment type="interaction">
    <interactant intactId="EBI-11962058">
        <id>Q5T7P2</id>
    </interactant>
    <interactant intactId="EBI-11956479">
        <id>P23142-4</id>
        <label>FBLN1</label>
    </interactant>
    <organismsDiffer>false</organismsDiffer>
    <experiments>3</experiments>
</comment>
<comment type="interaction">
    <interactant intactId="EBI-11962058">
        <id>Q5T7P2</id>
    </interactant>
    <interactant intactId="EBI-9050116">
        <id>Q9BTY2</id>
        <label>FUCA2</label>
    </interactant>
    <organismsDiffer>false</organismsDiffer>
    <experiments>3</experiments>
</comment>
<comment type="interaction">
    <interactant intactId="EBI-11962058">
        <id>Q5T7P2</id>
    </interactant>
    <interactant intactId="EBI-747754">
        <id>P28799</id>
        <label>GRN</label>
    </interactant>
    <organismsDiffer>false</organismsDiffer>
    <experiments>3</experiments>
</comment>
<comment type="interaction">
    <interactant intactId="EBI-11962058">
        <id>Q5T7P2</id>
    </interactant>
    <interactant intactId="EBI-740785">
        <id>P49639</id>
        <label>HOXA1</label>
    </interactant>
    <organismsDiffer>false</organismsDiffer>
    <experiments>6</experiments>
</comment>
<comment type="interaction">
    <interactant intactId="EBI-11962058">
        <id>Q5T7P2</id>
    </interactant>
    <interactant intactId="EBI-11959885">
        <id>Q07627</id>
        <label>KRTAP1-1</label>
    </interactant>
    <organismsDiffer>false</organismsDiffer>
    <experiments>3</experiments>
</comment>
<comment type="interaction">
    <interactant intactId="EBI-11962058">
        <id>Q5T7P2</id>
    </interactant>
    <interactant intactId="EBI-11749135">
        <id>Q8IUG1</id>
        <label>KRTAP1-3</label>
    </interactant>
    <organismsDiffer>false</organismsDiffer>
    <experiments>5</experiments>
</comment>
<comment type="interaction">
    <interactant intactId="EBI-11962058">
        <id>Q5T7P2</id>
    </interactant>
    <interactant intactId="EBI-10172290">
        <id>P60409</id>
        <label>KRTAP10-7</label>
    </interactant>
    <organismsDiffer>false</organismsDiffer>
    <experiments>3</experiments>
</comment>
<comment type="interaction">
    <interactant intactId="EBI-11962058">
        <id>Q5T7P2</id>
    </interactant>
    <interactant intactId="EBI-10171774">
        <id>P60410</id>
        <label>KRTAP10-8</label>
    </interactant>
    <organismsDiffer>false</organismsDiffer>
    <experiments>6</experiments>
</comment>
<comment type="interaction">
    <interactant intactId="EBI-11962058">
        <id>Q5T7P2</id>
    </interactant>
    <interactant intactId="EBI-10172052">
        <id>P60411</id>
        <label>KRTAP10-9</label>
    </interactant>
    <organismsDiffer>false</organismsDiffer>
    <experiments>3</experiments>
</comment>
<comment type="interaction">
    <interactant intactId="EBI-11962058">
        <id>Q5T7P2</id>
    </interactant>
    <interactant intactId="EBI-1052037">
        <id>Q8IUC1</id>
        <label>KRTAP11-1</label>
    </interactant>
    <organismsDiffer>false</organismsDiffer>
    <experiments>3</experiments>
</comment>
<comment type="interaction">
    <interactant intactId="EBI-11962058">
        <id>Q5T7P2</id>
    </interactant>
    <interactant intactId="EBI-10210845">
        <id>P59990</id>
        <label>KRTAP12-1</label>
    </interactant>
    <organismsDiffer>false</organismsDiffer>
    <experiments>3</experiments>
</comment>
<comment type="interaction">
    <interactant intactId="EBI-11962058">
        <id>Q5T7P2</id>
    </interactant>
    <interactant intactId="EBI-10176379">
        <id>P59991</id>
        <label>KRTAP12-2</label>
    </interactant>
    <organismsDiffer>false</organismsDiffer>
    <experiments>3</experiments>
</comment>
<comment type="interaction">
    <interactant intactId="EBI-11962058">
        <id>Q5T7P2</id>
    </interactant>
    <interactant intactId="EBI-11953334">
        <id>P60328</id>
        <label>KRTAP12-3</label>
    </interactant>
    <organismsDiffer>false</organismsDiffer>
    <experiments>6</experiments>
</comment>
<comment type="interaction">
    <interactant intactId="EBI-11962058">
        <id>Q5T7P2</id>
    </interactant>
    <interactant intactId="EBI-10176396">
        <id>P60329</id>
        <label>KRTAP12-4</label>
    </interactant>
    <organismsDiffer>false</organismsDiffer>
    <experiments>3</experiments>
</comment>
<comment type="interaction">
    <interactant intactId="EBI-11962058">
        <id>Q5T7P2</id>
    </interactant>
    <interactant intactId="EBI-18395721">
        <id>Q3LI59</id>
        <label>KRTAP21-2</label>
    </interactant>
    <organismsDiffer>false</organismsDiffer>
    <experiments>3</experiments>
</comment>
<comment type="interaction">
    <interactant intactId="EBI-11962058">
        <id>Q5T7P2</id>
    </interactant>
    <interactant intactId="EBI-751260">
        <id>Q9BYR7</id>
        <label>KRTAP3-2</label>
    </interactant>
    <organismsDiffer>false</organismsDiffer>
    <experiments>3</experiments>
</comment>
<comment type="interaction">
    <interactant intactId="EBI-11962058">
        <id>Q5T7P2</id>
    </interactant>
    <interactant intactId="EBI-10302392">
        <id>Q9BYQ6</id>
        <label>KRTAP4-11</label>
    </interactant>
    <organismsDiffer>false</organismsDiffer>
    <experiments>3</experiments>
</comment>
<comment type="interaction">
    <interactant intactId="EBI-11962058">
        <id>Q5T7P2</id>
    </interactant>
    <interactant intactId="EBI-739863">
        <id>Q9BQ66</id>
        <label>KRTAP4-12</label>
    </interactant>
    <organismsDiffer>false</organismsDiffer>
    <experiments>7</experiments>
</comment>
<comment type="interaction">
    <interactant intactId="EBI-11962058">
        <id>Q5T7P2</id>
    </interactant>
    <interactant intactId="EBI-10172511">
        <id>Q9BYR5</id>
        <label>KRTAP4-2</label>
    </interactant>
    <organismsDiffer>false</organismsDiffer>
    <experiments>3</experiments>
</comment>
<comment type="interaction">
    <interactant intactId="EBI-11962058">
        <id>Q5T7P2</id>
    </interactant>
    <interactant intactId="EBI-11958132">
        <id>Q9BYR3</id>
        <label>KRTAP4-4</label>
    </interactant>
    <organismsDiffer>false</organismsDiffer>
    <experiments>6</experiments>
</comment>
<comment type="interaction">
    <interactant intactId="EBI-11962058">
        <id>Q5T7P2</id>
    </interactant>
    <interactant intactId="EBI-11993254">
        <id>Q9BYR2</id>
        <label>KRTAP4-5</label>
    </interactant>
    <organismsDiffer>false</organismsDiffer>
    <experiments>3</experiments>
</comment>
<comment type="interaction">
    <interactant intactId="EBI-11962058">
        <id>Q5T7P2</id>
    </interactant>
    <interactant intactId="EBI-11993296">
        <id>Q6L8G4</id>
        <label>KRTAP5-11</label>
    </interactant>
    <organismsDiffer>false</organismsDiffer>
    <experiments>3</experiments>
</comment>
<comment type="interaction">
    <interactant intactId="EBI-11962058">
        <id>Q5T7P2</id>
    </interactant>
    <interactant intactId="EBI-11958178">
        <id>Q701N4</id>
        <label>KRTAP5-2</label>
    </interactant>
    <organismsDiffer>false</organismsDiffer>
    <experiments>3</experiments>
</comment>
<comment type="interaction">
    <interactant intactId="EBI-11962058">
        <id>Q5T7P2</id>
    </interactant>
    <interactant intactId="EBI-11974251">
        <id>Q6L8H2</id>
        <label>KRTAP5-3</label>
    </interactant>
    <organismsDiffer>false</organismsDiffer>
    <experiments>3</experiments>
</comment>
<comment type="interaction">
    <interactant intactId="EBI-11962058">
        <id>Q5T7P2</id>
    </interactant>
    <interactant intactId="EBI-10250562">
        <id>Q6L8G9</id>
        <label>KRTAP5-6</label>
    </interactant>
    <organismsDiffer>false</organismsDiffer>
    <experiments>3</experiments>
</comment>
<comment type="interaction">
    <interactant intactId="EBI-11962058">
        <id>Q5T7P2</id>
    </interactant>
    <interactant intactId="EBI-11987425">
        <id>Q6L8G8</id>
        <label>KRTAP5-7</label>
    </interactant>
    <organismsDiffer>false</organismsDiffer>
    <experiments>3</experiments>
</comment>
<comment type="interaction">
    <interactant intactId="EBI-11962058">
        <id>Q5T7P2</id>
    </interactant>
    <interactant intactId="EBI-3958099">
        <id>P26371</id>
        <label>KRTAP5-9</label>
    </interactant>
    <organismsDiffer>false</organismsDiffer>
    <experiments>3</experiments>
</comment>
<comment type="interaction">
    <interactant intactId="EBI-11962058">
        <id>Q5T7P2</id>
    </interactant>
    <interactant intactId="EBI-1044640">
        <id>Q9BYQ4</id>
        <label>KRTAP9-2</label>
    </interactant>
    <organismsDiffer>false</organismsDiffer>
    <experiments>3</experiments>
</comment>
<comment type="interaction">
    <interactant intactId="EBI-11962058">
        <id>Q5T7P2</id>
    </interactant>
    <interactant intactId="EBI-1043191">
        <id>Q9BYQ3</id>
        <label>KRTAP9-3</label>
    </interactant>
    <organismsDiffer>false</organismsDiffer>
    <experiments>6</experiments>
</comment>
<comment type="interaction">
    <interactant intactId="EBI-11962058">
        <id>Q5T7P2</id>
    </interactant>
    <interactant intactId="EBI-11958364">
        <id>Q9BYQ0</id>
        <label>KRTAP9-8</label>
    </interactant>
    <organismsDiffer>false</organismsDiffer>
    <experiments>6</experiments>
</comment>
<comment type="interaction">
    <interactant intactId="EBI-11962058">
        <id>Q5T7P2</id>
    </interactant>
    <interactant intactId="EBI-10245913">
        <id>Q5T7P3</id>
        <label>LCE1B</label>
    </interactant>
    <organismsDiffer>false</organismsDiffer>
    <experiments>3</experiments>
</comment>
<comment type="interaction">
    <interactant intactId="EBI-11962058">
        <id>Q5T7P2</id>
    </interactant>
    <interactant intactId="EBI-12224199">
        <id>Q5T751</id>
        <label>LCE1C</label>
    </interactant>
    <organismsDiffer>false</organismsDiffer>
    <experiments>3</experiments>
</comment>
<comment type="interaction">
    <interactant intactId="EBI-11962058">
        <id>Q5T7P2</id>
    </interactant>
    <interactant intactId="EBI-11955335">
        <id>Q5T753</id>
        <label>LCE1E</label>
    </interactant>
    <organismsDiffer>false</organismsDiffer>
    <experiments>3</experiments>
</comment>
<comment type="interaction">
    <interactant intactId="EBI-11962058">
        <id>Q5T7P2</id>
    </interactant>
    <interactant intactId="EBI-11958008">
        <id>Q5T754</id>
        <label>LCE1F</label>
    </interactant>
    <organismsDiffer>false</organismsDiffer>
    <experiments>3</experiments>
</comment>
<comment type="interaction">
    <interactant intactId="EBI-11962058">
        <id>Q5T7P2</id>
    </interactant>
    <interactant intactId="EBI-10246607">
        <id>Q5TA79</id>
        <label>LCE2A</label>
    </interactant>
    <organismsDiffer>false</organismsDiffer>
    <experiments>3</experiments>
</comment>
<comment type="interaction">
    <interactant intactId="EBI-11962058">
        <id>Q5T7P2</id>
    </interactant>
    <interactant intactId="EBI-11478468">
        <id>O14633</id>
        <label>LCE2B</label>
    </interactant>
    <organismsDiffer>false</organismsDiffer>
    <experiments>3</experiments>
</comment>
<comment type="interaction">
    <interactant intactId="EBI-11962058">
        <id>Q5T7P2</id>
    </interactant>
    <interactant intactId="EBI-11973993">
        <id>Q5TA81</id>
        <label>LCE2C</label>
    </interactant>
    <organismsDiffer>false</organismsDiffer>
    <experiments>6</experiments>
</comment>
<comment type="interaction">
    <interactant intactId="EBI-11962058">
        <id>Q5T7P2</id>
    </interactant>
    <interactant intactId="EBI-10246750">
        <id>Q5TA82</id>
        <label>LCE2D</label>
    </interactant>
    <organismsDiffer>false</organismsDiffer>
    <experiments>3</experiments>
</comment>
<comment type="interaction">
    <interactant intactId="EBI-11962058">
        <id>Q5T7P2</id>
    </interactant>
    <interactant intactId="EBI-10246358">
        <id>Q5TA78</id>
        <label>LCE4A</label>
    </interactant>
    <organismsDiffer>false</organismsDiffer>
    <experiments>3</experiments>
</comment>
<comment type="interaction">
    <interactant intactId="EBI-11962058">
        <id>Q5T7P2</id>
    </interactant>
    <interactant intactId="EBI-11955689">
        <id>Q5TCM9</id>
        <label>LCE5A</label>
    </interactant>
    <organismsDiffer>false</organismsDiffer>
    <experiments>3</experiments>
</comment>
<comment type="interaction">
    <interactant intactId="EBI-11962058">
        <id>Q5T7P2</id>
    </interactant>
    <interactant intactId="EBI-724076">
        <id>Q99750</id>
        <label>MDFI</label>
    </interactant>
    <organismsDiffer>false</organismsDiffer>
    <experiments>3</experiments>
</comment>
<comment type="interaction">
    <interactant intactId="EBI-11962058">
        <id>Q5T7P2</id>
    </interactant>
    <interactant intactId="EBI-6165891">
        <id>Q14696</id>
        <label>MESD</label>
    </interactant>
    <organismsDiffer>false</organismsDiffer>
    <experiments>3</experiments>
</comment>
<comment type="interaction">
    <interactant intactId="EBI-11962058">
        <id>Q5T7P2</id>
    </interactant>
    <interactant intactId="EBI-10261509">
        <id>Q8IV28</id>
        <label>NID2</label>
    </interactant>
    <organismsDiffer>false</organismsDiffer>
    <experiments>3</experiments>
</comment>
<comment type="interaction">
    <interactant intactId="EBI-11962058">
        <id>Q5T7P2</id>
    </interactant>
    <interactant intactId="EBI-22310682">
        <id>P0DPK4</id>
        <label>NOTCH2NLC</label>
    </interactant>
    <organismsDiffer>false</organismsDiffer>
    <experiments>3</experiments>
</comment>
<comment type="interaction">
    <interactant intactId="EBI-11962058">
        <id>Q5T7P2</id>
    </interactant>
    <interactant intactId="EBI-726466">
        <id>O15496</id>
        <label>PLA2G10</label>
    </interactant>
    <organismsDiffer>false</organismsDiffer>
    <experiments>3</experiments>
</comment>
<comment type="interaction">
    <interactant intactId="EBI-11962058">
        <id>Q5T7P2</id>
    </interactant>
    <interactant intactId="EBI-3937430">
        <id>Q9NRY7</id>
        <label>PLSCR2</label>
    </interactant>
    <organismsDiffer>false</organismsDiffer>
    <experiments>3</experiments>
</comment>
<comment type="interaction">
    <interactant intactId="EBI-11962058">
        <id>Q5T7P2</id>
    </interactant>
    <interactant intactId="EBI-769257">
        <id>Q9NRQ2</id>
        <label>PLSCR4</label>
    </interactant>
    <organismsDiffer>false</organismsDiffer>
    <experiments>3</experiments>
</comment>
<comment type="interaction">
    <interactant intactId="EBI-11962058">
        <id>Q5T7P2</id>
    </interactant>
    <interactant intactId="EBI-3918154">
        <id>Q9UGC6</id>
        <label>RGS17</label>
    </interactant>
    <organismsDiffer>false</organismsDiffer>
    <experiments>3</experiments>
</comment>
<comment type="interaction">
    <interactant intactId="EBI-11962058">
        <id>Q5T7P2</id>
    </interactant>
    <interactant intactId="EBI-10178530">
        <id>O76081-6</id>
        <label>RGS20</label>
    </interactant>
    <organismsDiffer>false</organismsDiffer>
    <experiments>3</experiments>
</comment>
<comment type="interaction">
    <interactant intactId="EBI-11962058">
        <id>Q5T7P2</id>
    </interactant>
    <interactant intactId="EBI-1051105">
        <id>Q92504</id>
        <label>SLC39A7</label>
    </interactant>
    <organismsDiffer>false</organismsDiffer>
    <experiments>3</experiments>
</comment>
<comment type="interaction">
    <interactant intactId="EBI-11962058">
        <id>Q5T7P2</id>
    </interactant>
    <interactant intactId="EBI-750494">
        <id>P49901</id>
        <label>SMCP</label>
    </interactant>
    <organismsDiffer>false</organismsDiffer>
    <experiments>3</experiments>
</comment>
<comment type="interaction">
    <interactant intactId="EBI-11962058">
        <id>Q5T7P2</id>
    </interactant>
    <interactant intactId="EBI-3866665">
        <id>O43609</id>
        <label>SPRY1</label>
    </interactant>
    <organismsDiffer>false</organismsDiffer>
    <experiments>3</experiments>
</comment>
<comment type="interaction">
    <interactant intactId="EBI-11962058">
        <id>Q5T7P2</id>
    </interactant>
    <interactant intactId="EBI-12290641">
        <id>O43610</id>
        <label>SPRY3</label>
    </interactant>
    <organismsDiffer>false</organismsDiffer>
    <experiments>3</experiments>
</comment>
<comment type="interaction">
    <interactant intactId="EBI-11962058">
        <id>Q5T7P2</id>
    </interactant>
    <interactant intactId="EBI-779636">
        <id>P01137</id>
        <label>TGFB1</label>
    </interactant>
    <organismsDiffer>false</organismsDiffer>
    <experiments>3</experiments>
</comment>
<comment type="interaction">
    <interactant intactId="EBI-11962058">
        <id>Q5T7P2</id>
    </interactant>
    <interactant intactId="EBI-5235829">
        <id>Q8IWZ5</id>
        <label>TRIM42</label>
    </interactant>
    <organismsDiffer>false</organismsDiffer>
    <experiments>3</experiments>
</comment>
<comment type="interaction">
    <interactant intactId="EBI-11962058">
        <id>Q5T7P2</id>
    </interactant>
    <interactant intactId="EBI-8652667">
        <id>O14817</id>
        <label>TSPAN4</label>
    </interactant>
    <organismsDiffer>false</organismsDiffer>
    <experiments>3</experiments>
</comment>
<comment type="interaction">
    <interactant intactId="EBI-11962058">
        <id>Q5T7P2</id>
    </interactant>
    <interactant intactId="EBI-11957238">
        <id>Q2TAL6</id>
        <label>VWC2</label>
    </interactant>
    <organismsDiffer>false</organismsDiffer>
    <experiments>3</experiments>
</comment>
<comment type="interaction">
    <interactant intactId="EBI-11962058">
        <id>Q5T7P2</id>
    </interactant>
    <interactant intactId="EBI-11747707">
        <id>B2RUY7</id>
        <label>VWC2L</label>
    </interactant>
    <organismsDiffer>false</organismsDiffer>
    <experiments>3</experiments>
</comment>
<comment type="interaction">
    <interactant intactId="EBI-11962058">
        <id>Q5T7P2</id>
    </interactant>
    <interactant intactId="EBI-9088990">
        <id>Q7Z783</id>
    </interactant>
    <organismsDiffer>false</organismsDiffer>
    <experiments>3</experiments>
</comment>
<comment type="interaction">
    <interactant intactId="EBI-11962058">
        <id>Q5T7P2</id>
    </interactant>
    <interactant intactId="EBI-750454">
        <id>Q96EJ4</id>
    </interactant>
    <organismsDiffer>false</organismsDiffer>
    <experiments>3</experiments>
</comment>
<comment type="tissue specificity">
    <text evidence="2">Skin-specific. Expression was readily detected in adult trunk skin, adult arm skin, fetal skin, penal skin, vulva, esophagus and tongue. Not expressed in the cervix, rectum, lung, colon, or placenta.</text>
</comment>
<comment type="induction">
    <text evidence="2">By UVB.</text>
</comment>
<comment type="miscellaneous">
    <text>Belongs to the LCE cluster present on 1q21.</text>
</comment>
<comment type="similarity">
    <text evidence="4">Belongs to the LCE family.</text>
</comment>
<gene>
    <name type="primary">LCE1A</name>
    <name type="synonym">LEP1</name>
</gene>
<proteinExistence type="evidence at protein level"/>